<proteinExistence type="inferred from homology"/>
<accession>Q18BA9</accession>
<gene>
    <name evidence="1" type="primary">efp</name>
    <name type="ordered locus">CD630_12460</name>
</gene>
<name>EFP_CLOD6</name>
<comment type="function">
    <text evidence="1">Involved in peptide bond synthesis. Stimulates efficient translation and peptide-bond synthesis on native or reconstituted 70S ribosomes in vitro. Probably functions indirectly by altering the affinity of the ribosome for aminoacyl-tRNA, thus increasing their reactivity as acceptors for peptidyl transferase.</text>
</comment>
<comment type="pathway">
    <text evidence="1">Protein biosynthesis; polypeptide chain elongation.</text>
</comment>
<comment type="subcellular location">
    <subcellularLocation>
        <location evidence="1">Cytoplasm</location>
    </subcellularLocation>
</comment>
<comment type="similarity">
    <text evidence="1">Belongs to the elongation factor P family.</text>
</comment>
<protein>
    <recommendedName>
        <fullName evidence="1">Elongation factor P</fullName>
        <shortName evidence="1">EF-P</shortName>
    </recommendedName>
</protein>
<evidence type="ECO:0000255" key="1">
    <source>
        <dbReference type="HAMAP-Rule" id="MF_00141"/>
    </source>
</evidence>
<sequence>MVSAGDFRKGVTFEKDGQPCLVVDFQHVKPGKGAAFVRTKYKNLKTGAIREESFNPSEKFPKAVIDTRQMQYLYNDGELYYFMDQENFEQIPLNYEQVEDAIKFLKENEVATIRFYQGQPFQVEAPNFAELEVTDTEPGIKGDTASNVTKAATVETGAVVQVPLFINTGDKVKIDTRTGEYLSRV</sequence>
<keyword id="KW-0963">Cytoplasm</keyword>
<keyword id="KW-0251">Elongation factor</keyword>
<keyword id="KW-0648">Protein biosynthesis</keyword>
<keyword id="KW-1185">Reference proteome</keyword>
<reference key="1">
    <citation type="journal article" date="2006" name="Nat. Genet.">
        <title>The multidrug-resistant human pathogen Clostridium difficile has a highly mobile, mosaic genome.</title>
        <authorList>
            <person name="Sebaihia M."/>
            <person name="Wren B.W."/>
            <person name="Mullany P."/>
            <person name="Fairweather N.F."/>
            <person name="Minton N."/>
            <person name="Stabler R."/>
            <person name="Thomson N.R."/>
            <person name="Roberts A.P."/>
            <person name="Cerdeno-Tarraga A.M."/>
            <person name="Wang H."/>
            <person name="Holden M.T.G."/>
            <person name="Wright A."/>
            <person name="Churcher C."/>
            <person name="Quail M.A."/>
            <person name="Baker S."/>
            <person name="Bason N."/>
            <person name="Brooks K."/>
            <person name="Chillingworth T."/>
            <person name="Cronin A."/>
            <person name="Davis P."/>
            <person name="Dowd L."/>
            <person name="Fraser A."/>
            <person name="Feltwell T."/>
            <person name="Hance Z."/>
            <person name="Holroyd S."/>
            <person name="Jagels K."/>
            <person name="Moule S."/>
            <person name="Mungall K."/>
            <person name="Price C."/>
            <person name="Rabbinowitsch E."/>
            <person name="Sharp S."/>
            <person name="Simmonds M."/>
            <person name="Stevens K."/>
            <person name="Unwin L."/>
            <person name="Whithead S."/>
            <person name="Dupuy B."/>
            <person name="Dougan G."/>
            <person name="Barrell B."/>
            <person name="Parkhill J."/>
        </authorList>
    </citation>
    <scope>NUCLEOTIDE SEQUENCE [LARGE SCALE GENOMIC DNA]</scope>
    <source>
        <strain>630</strain>
    </source>
</reference>
<dbReference type="EMBL" id="AM180355">
    <property type="protein sequence ID" value="CAJ68101.1"/>
    <property type="molecule type" value="Genomic_DNA"/>
</dbReference>
<dbReference type="RefSeq" id="WP_009889023.1">
    <property type="nucleotide sequence ID" value="NZ_JAUPES010000045.1"/>
</dbReference>
<dbReference type="RefSeq" id="YP_001087739.1">
    <property type="nucleotide sequence ID" value="NC_009089.1"/>
</dbReference>
<dbReference type="SMR" id="Q18BA9"/>
<dbReference type="STRING" id="272563.CD630_12460"/>
<dbReference type="EnsemblBacteria" id="CAJ68101">
    <property type="protein sequence ID" value="CAJ68101"/>
    <property type="gene ID" value="CD630_12460"/>
</dbReference>
<dbReference type="GeneID" id="66353646"/>
<dbReference type="KEGG" id="cdf:CD630_12460"/>
<dbReference type="KEGG" id="pdc:CDIF630_01398"/>
<dbReference type="PATRIC" id="fig|272563.120.peg.1303"/>
<dbReference type="eggNOG" id="COG0231">
    <property type="taxonomic scope" value="Bacteria"/>
</dbReference>
<dbReference type="OrthoDB" id="9801844at2"/>
<dbReference type="PhylomeDB" id="Q18BA9"/>
<dbReference type="BioCyc" id="PDIF272563:G12WB-1379-MONOMER"/>
<dbReference type="UniPathway" id="UPA00345"/>
<dbReference type="Proteomes" id="UP000001978">
    <property type="component" value="Chromosome"/>
</dbReference>
<dbReference type="GO" id="GO:0005737">
    <property type="term" value="C:cytoplasm"/>
    <property type="evidence" value="ECO:0007669"/>
    <property type="project" value="UniProtKB-SubCell"/>
</dbReference>
<dbReference type="GO" id="GO:0003746">
    <property type="term" value="F:translation elongation factor activity"/>
    <property type="evidence" value="ECO:0007669"/>
    <property type="project" value="UniProtKB-UniRule"/>
</dbReference>
<dbReference type="GO" id="GO:0043043">
    <property type="term" value="P:peptide biosynthetic process"/>
    <property type="evidence" value="ECO:0007669"/>
    <property type="project" value="InterPro"/>
</dbReference>
<dbReference type="CDD" id="cd04470">
    <property type="entry name" value="S1_EF-P_repeat_1"/>
    <property type="match status" value="1"/>
</dbReference>
<dbReference type="CDD" id="cd05794">
    <property type="entry name" value="S1_EF-P_repeat_2"/>
    <property type="match status" value="1"/>
</dbReference>
<dbReference type="FunFam" id="2.30.30.30:FF:000003">
    <property type="entry name" value="Elongation factor P"/>
    <property type="match status" value="1"/>
</dbReference>
<dbReference type="FunFam" id="2.40.50.140:FF:000004">
    <property type="entry name" value="Elongation factor P"/>
    <property type="match status" value="1"/>
</dbReference>
<dbReference type="FunFam" id="2.40.50.140:FF:000009">
    <property type="entry name" value="Elongation factor P"/>
    <property type="match status" value="1"/>
</dbReference>
<dbReference type="Gene3D" id="2.30.30.30">
    <property type="match status" value="1"/>
</dbReference>
<dbReference type="Gene3D" id="2.40.50.140">
    <property type="entry name" value="Nucleic acid-binding proteins"/>
    <property type="match status" value="2"/>
</dbReference>
<dbReference type="HAMAP" id="MF_00141">
    <property type="entry name" value="EF_P"/>
    <property type="match status" value="1"/>
</dbReference>
<dbReference type="InterPro" id="IPR015365">
    <property type="entry name" value="Elong-fact-P_C"/>
</dbReference>
<dbReference type="InterPro" id="IPR012340">
    <property type="entry name" value="NA-bd_OB-fold"/>
</dbReference>
<dbReference type="InterPro" id="IPR014722">
    <property type="entry name" value="Rib_uL2_dom2"/>
</dbReference>
<dbReference type="InterPro" id="IPR020599">
    <property type="entry name" value="Transl_elong_fac_P/YeiP"/>
</dbReference>
<dbReference type="InterPro" id="IPR013185">
    <property type="entry name" value="Transl_elong_KOW-like"/>
</dbReference>
<dbReference type="InterPro" id="IPR001059">
    <property type="entry name" value="Transl_elong_P/YeiP_cen"/>
</dbReference>
<dbReference type="InterPro" id="IPR013852">
    <property type="entry name" value="Transl_elong_P/YeiP_CS"/>
</dbReference>
<dbReference type="InterPro" id="IPR011768">
    <property type="entry name" value="Transl_elongation_fac_P"/>
</dbReference>
<dbReference type="InterPro" id="IPR008991">
    <property type="entry name" value="Translation_prot_SH3-like_sf"/>
</dbReference>
<dbReference type="NCBIfam" id="TIGR00038">
    <property type="entry name" value="efp"/>
    <property type="match status" value="1"/>
</dbReference>
<dbReference type="NCBIfam" id="NF001810">
    <property type="entry name" value="PRK00529.1"/>
    <property type="match status" value="1"/>
</dbReference>
<dbReference type="PANTHER" id="PTHR30053">
    <property type="entry name" value="ELONGATION FACTOR P"/>
    <property type="match status" value="1"/>
</dbReference>
<dbReference type="PANTHER" id="PTHR30053:SF12">
    <property type="entry name" value="ELONGATION FACTOR P (EF-P) FAMILY PROTEIN"/>
    <property type="match status" value="1"/>
</dbReference>
<dbReference type="Pfam" id="PF01132">
    <property type="entry name" value="EFP"/>
    <property type="match status" value="1"/>
</dbReference>
<dbReference type="Pfam" id="PF08207">
    <property type="entry name" value="EFP_N"/>
    <property type="match status" value="1"/>
</dbReference>
<dbReference type="Pfam" id="PF09285">
    <property type="entry name" value="Elong-fact-P_C"/>
    <property type="match status" value="1"/>
</dbReference>
<dbReference type="PIRSF" id="PIRSF005901">
    <property type="entry name" value="EF-P"/>
    <property type="match status" value="1"/>
</dbReference>
<dbReference type="SMART" id="SM01185">
    <property type="entry name" value="EFP"/>
    <property type="match status" value="1"/>
</dbReference>
<dbReference type="SMART" id="SM00841">
    <property type="entry name" value="Elong-fact-P_C"/>
    <property type="match status" value="1"/>
</dbReference>
<dbReference type="SUPFAM" id="SSF50249">
    <property type="entry name" value="Nucleic acid-binding proteins"/>
    <property type="match status" value="2"/>
</dbReference>
<dbReference type="SUPFAM" id="SSF50104">
    <property type="entry name" value="Translation proteins SH3-like domain"/>
    <property type="match status" value="1"/>
</dbReference>
<dbReference type="PROSITE" id="PS01275">
    <property type="entry name" value="EFP"/>
    <property type="match status" value="1"/>
</dbReference>
<feature type="chain" id="PRO_1000010720" description="Elongation factor P">
    <location>
        <begin position="1"/>
        <end position="185"/>
    </location>
</feature>
<organism>
    <name type="scientific">Clostridioides difficile (strain 630)</name>
    <name type="common">Peptoclostridium difficile</name>
    <dbReference type="NCBI Taxonomy" id="272563"/>
    <lineage>
        <taxon>Bacteria</taxon>
        <taxon>Bacillati</taxon>
        <taxon>Bacillota</taxon>
        <taxon>Clostridia</taxon>
        <taxon>Peptostreptococcales</taxon>
        <taxon>Peptostreptococcaceae</taxon>
        <taxon>Clostridioides</taxon>
    </lineage>
</organism>